<feature type="chain" id="PRO_0000424838" description="Protein REVEILLE 5">
    <location>
        <begin position="1"/>
        <end position="303"/>
    </location>
</feature>
<feature type="domain" description="HTH myb-type" evidence="2">
    <location>
        <begin position="54"/>
        <end position="108"/>
    </location>
</feature>
<feature type="DNA-binding region" description="H-T-H motif" evidence="2">
    <location>
        <begin position="81"/>
        <end position="104"/>
    </location>
</feature>
<feature type="region of interest" description="Disordered" evidence="3">
    <location>
        <begin position="109"/>
        <end position="130"/>
    </location>
</feature>
<feature type="splice variant" id="VSP_053509" description="In isoform 2." evidence="4 5">
    <location>
        <position position="192"/>
    </location>
</feature>
<gene>
    <name type="primary">RVE5</name>
    <name type="ordered locus">At4g01280</name>
    <name type="ORF">F2N1.20</name>
</gene>
<organism>
    <name type="scientific">Arabidopsis thaliana</name>
    <name type="common">Mouse-ear cress</name>
    <dbReference type="NCBI Taxonomy" id="3702"/>
    <lineage>
        <taxon>Eukaryota</taxon>
        <taxon>Viridiplantae</taxon>
        <taxon>Streptophyta</taxon>
        <taxon>Embryophyta</taxon>
        <taxon>Tracheophyta</taxon>
        <taxon>Spermatophyta</taxon>
        <taxon>Magnoliopsida</taxon>
        <taxon>eudicotyledons</taxon>
        <taxon>Gunneridae</taxon>
        <taxon>Pentapetalae</taxon>
        <taxon>rosids</taxon>
        <taxon>malvids</taxon>
        <taxon>Brassicales</taxon>
        <taxon>Brassicaceae</taxon>
        <taxon>Camelineae</taxon>
        <taxon>Arabidopsis</taxon>
    </lineage>
</organism>
<proteinExistence type="evidence at transcript level"/>
<sequence length="303" mass="33890">MVSVNPRPKGFPVFDSSNMSLPSSDGFGSIPATGRTSTVSFSEDPTTKIRKPYTIKKSRENWTDQEHDKFLEALHLFDRDWKKIEAFVGSKTVVQIRSHAQKYFLKVQKSGANEHLPPPRPKRKASHPYPIKAPKNVAYTSLPSSSTLPLLEPGYLYSSDSKSLMGNQAVCASTSSSWNHESTNLPKPVIEVEEPGVSATAPLPNNRCRQEDTERVRAVTKPNNEESCEKPHRVMPNFAEVYSFIGSVFDPNTSGHLQRLKQMDPINMETVLLLMQNLSVNLTSPEFAEQRRLISSYSAKALK</sequence>
<comment type="function">
    <text evidence="1">Probable transcription factor.</text>
</comment>
<comment type="subcellular location">
    <subcellularLocation>
        <location evidence="2">Nucleus</location>
    </subcellularLocation>
</comment>
<comment type="alternative products">
    <event type="alternative splicing"/>
    <isoform>
        <id>C0SVG5-1</id>
        <name>1</name>
        <sequence type="displayed"/>
    </isoform>
    <isoform>
        <id>C0SVG5-2</id>
        <name>2</name>
        <sequence type="described" ref="VSP_053509"/>
    </isoform>
</comment>
<comment type="sequence caution" evidence="6">
    <conflict type="erroneous initiation">
        <sequence resource="EMBL-CDS" id="CAB80937"/>
    </conflict>
    <text>Truncated N-terminus.</text>
</comment>
<name>RVE5_ARATH</name>
<dbReference type="EMBL" id="AJ937212">
    <property type="protein sequence ID" value="CAI77453.1"/>
    <property type="molecule type" value="mRNA"/>
</dbReference>
<dbReference type="EMBL" id="AL161491">
    <property type="protein sequence ID" value="CAB80937.1"/>
    <property type="status" value="ALT_INIT"/>
    <property type="molecule type" value="Genomic_DNA"/>
</dbReference>
<dbReference type="EMBL" id="CP002687">
    <property type="protein sequence ID" value="AEE82003.1"/>
    <property type="molecule type" value="Genomic_DNA"/>
</dbReference>
<dbReference type="EMBL" id="CP002687">
    <property type="protein sequence ID" value="AEE82004.1"/>
    <property type="molecule type" value="Genomic_DNA"/>
</dbReference>
<dbReference type="EMBL" id="AB493668">
    <property type="protein sequence ID" value="BAH30506.1"/>
    <property type="molecule type" value="mRNA"/>
</dbReference>
<dbReference type="EMBL" id="BT024711">
    <property type="protein sequence ID" value="ABD59049.1"/>
    <property type="molecule type" value="mRNA"/>
</dbReference>
<dbReference type="EMBL" id="AY519513">
    <property type="protein sequence ID" value="AAS09983.1"/>
    <property type="molecule type" value="mRNA"/>
</dbReference>
<dbReference type="PIR" id="G85016">
    <property type="entry name" value="G85016"/>
</dbReference>
<dbReference type="RefSeq" id="NP_001031568.1">
    <molecule id="C0SVG5-1"/>
    <property type="nucleotide sequence ID" value="NM_001036491.4"/>
</dbReference>
<dbReference type="RefSeq" id="NP_192037.2">
    <molecule id="C0SVG5-2"/>
    <property type="nucleotide sequence ID" value="NM_116358.6"/>
</dbReference>
<dbReference type="SMR" id="C0SVG5"/>
<dbReference type="BioGRID" id="13194">
    <property type="interactions" value="1"/>
</dbReference>
<dbReference type="FunCoup" id="C0SVG5">
    <property type="interactions" value="30"/>
</dbReference>
<dbReference type="STRING" id="3702.C0SVG5"/>
<dbReference type="iPTMnet" id="C0SVG5"/>
<dbReference type="PaxDb" id="3702-AT4G01280.2"/>
<dbReference type="EnsemblPlants" id="AT4G01280.1">
    <molecule id="C0SVG5-2"/>
    <property type="protein sequence ID" value="AT4G01280.1"/>
    <property type="gene ID" value="AT4G01280"/>
</dbReference>
<dbReference type="EnsemblPlants" id="AT4G01280.2">
    <molecule id="C0SVG5-1"/>
    <property type="protein sequence ID" value="AT4G01280.2"/>
    <property type="gene ID" value="AT4G01280"/>
</dbReference>
<dbReference type="GeneID" id="827903"/>
<dbReference type="Gramene" id="AT4G01280.1">
    <molecule id="C0SVG5-2"/>
    <property type="protein sequence ID" value="AT4G01280.1"/>
    <property type="gene ID" value="AT4G01280"/>
</dbReference>
<dbReference type="Gramene" id="AT4G01280.2">
    <molecule id="C0SVG5-1"/>
    <property type="protein sequence ID" value="AT4G01280.2"/>
    <property type="gene ID" value="AT4G01280"/>
</dbReference>
<dbReference type="KEGG" id="ath:AT4G01280"/>
<dbReference type="Araport" id="AT4G01280"/>
<dbReference type="TAIR" id="AT4G01280">
    <property type="gene designation" value="RVE5"/>
</dbReference>
<dbReference type="eggNOG" id="KOG0724">
    <property type="taxonomic scope" value="Eukaryota"/>
</dbReference>
<dbReference type="InParanoid" id="C0SVG5"/>
<dbReference type="OMA" id="PNTSGHI"/>
<dbReference type="PhylomeDB" id="C0SVG5"/>
<dbReference type="PRO" id="PR:C0SVG5"/>
<dbReference type="Proteomes" id="UP000006548">
    <property type="component" value="Chromosome 4"/>
</dbReference>
<dbReference type="ExpressionAtlas" id="C0SVG5">
    <property type="expression patterns" value="baseline and differential"/>
</dbReference>
<dbReference type="GO" id="GO:0005634">
    <property type="term" value="C:nucleus"/>
    <property type="evidence" value="ECO:0007669"/>
    <property type="project" value="UniProtKB-SubCell"/>
</dbReference>
<dbReference type="GO" id="GO:0003677">
    <property type="term" value="F:DNA binding"/>
    <property type="evidence" value="ECO:0007669"/>
    <property type="project" value="UniProtKB-KW"/>
</dbReference>
<dbReference type="GO" id="GO:0003700">
    <property type="term" value="F:DNA-binding transcription factor activity"/>
    <property type="evidence" value="ECO:0000250"/>
    <property type="project" value="TAIR"/>
</dbReference>
<dbReference type="CDD" id="cd00167">
    <property type="entry name" value="SANT"/>
    <property type="match status" value="1"/>
</dbReference>
<dbReference type="FunFam" id="1.10.10.60:FF:000023">
    <property type="entry name" value="protein REVEILLE 6 isoform X1"/>
    <property type="match status" value="1"/>
</dbReference>
<dbReference type="Gene3D" id="1.10.10.60">
    <property type="entry name" value="Homeodomain-like"/>
    <property type="match status" value="1"/>
</dbReference>
<dbReference type="InterPro" id="IPR009057">
    <property type="entry name" value="Homeodomain-like_sf"/>
</dbReference>
<dbReference type="InterPro" id="IPR017930">
    <property type="entry name" value="Myb_dom"/>
</dbReference>
<dbReference type="InterPro" id="IPR006447">
    <property type="entry name" value="Myb_dom_plants"/>
</dbReference>
<dbReference type="InterPro" id="IPR001005">
    <property type="entry name" value="SANT/Myb"/>
</dbReference>
<dbReference type="InterPro" id="IPR017884">
    <property type="entry name" value="SANT_dom"/>
</dbReference>
<dbReference type="NCBIfam" id="TIGR01557">
    <property type="entry name" value="myb_SHAQKYF"/>
    <property type="match status" value="1"/>
</dbReference>
<dbReference type="PANTHER" id="PTHR12802:SF167">
    <property type="entry name" value="PROTEIN REVEILLE 5"/>
    <property type="match status" value="1"/>
</dbReference>
<dbReference type="PANTHER" id="PTHR12802">
    <property type="entry name" value="SWI/SNF COMPLEX-RELATED"/>
    <property type="match status" value="1"/>
</dbReference>
<dbReference type="Pfam" id="PF00249">
    <property type="entry name" value="Myb_DNA-binding"/>
    <property type="match status" value="1"/>
</dbReference>
<dbReference type="Pfam" id="PF24904">
    <property type="entry name" value="RVE6"/>
    <property type="match status" value="1"/>
</dbReference>
<dbReference type="SMART" id="SM00717">
    <property type="entry name" value="SANT"/>
    <property type="match status" value="1"/>
</dbReference>
<dbReference type="SUPFAM" id="SSF46689">
    <property type="entry name" value="Homeodomain-like"/>
    <property type="match status" value="1"/>
</dbReference>
<dbReference type="PROSITE" id="PS51294">
    <property type="entry name" value="HTH_MYB"/>
    <property type="match status" value="1"/>
</dbReference>
<accession>C0SVG5</accession>
<accession>Q571Z4</accession>
<accession>Q9M142</accession>
<keyword id="KW-0025">Alternative splicing</keyword>
<keyword id="KW-0238">DNA-binding</keyword>
<keyword id="KW-0371">Homeobox</keyword>
<keyword id="KW-0539">Nucleus</keyword>
<keyword id="KW-1185">Reference proteome</keyword>
<keyword id="KW-0804">Transcription</keyword>
<keyword id="KW-0805">Transcription regulation</keyword>
<protein>
    <recommendedName>
        <fullName>Protein REVEILLE 5</fullName>
    </recommendedName>
</protein>
<reference key="1">
    <citation type="submission" date="2005-04" db="EMBL/GenBank/DDBJ databases">
        <title>A small family of LHY-CCA1-like (LCL) MYB1R transcription factors: potential co-regulators of the circadian oscillator.</title>
        <authorList>
            <person name="Schmied K.C."/>
            <person name="Merkle T."/>
        </authorList>
    </citation>
    <scope>NUCLEOTIDE SEQUENCE [MRNA] (ISOFORM 2)</scope>
    <source>
        <strain>cv. Columbia</strain>
    </source>
</reference>
<reference key="2">
    <citation type="journal article" date="1999" name="Nature">
        <title>Sequence and analysis of chromosome 4 of the plant Arabidopsis thaliana.</title>
        <authorList>
            <person name="Mayer K.F.X."/>
            <person name="Schueller C."/>
            <person name="Wambutt R."/>
            <person name="Murphy G."/>
            <person name="Volckaert G."/>
            <person name="Pohl T."/>
            <person name="Duesterhoeft A."/>
            <person name="Stiekema W."/>
            <person name="Entian K.-D."/>
            <person name="Terryn N."/>
            <person name="Harris B."/>
            <person name="Ansorge W."/>
            <person name="Brandt P."/>
            <person name="Grivell L.A."/>
            <person name="Rieger M."/>
            <person name="Weichselgartner M."/>
            <person name="de Simone V."/>
            <person name="Obermaier B."/>
            <person name="Mache R."/>
            <person name="Mueller M."/>
            <person name="Kreis M."/>
            <person name="Delseny M."/>
            <person name="Puigdomenech P."/>
            <person name="Watson M."/>
            <person name="Schmidtheini T."/>
            <person name="Reichert B."/>
            <person name="Portetelle D."/>
            <person name="Perez-Alonso M."/>
            <person name="Boutry M."/>
            <person name="Bancroft I."/>
            <person name="Vos P."/>
            <person name="Hoheisel J."/>
            <person name="Zimmermann W."/>
            <person name="Wedler H."/>
            <person name="Ridley P."/>
            <person name="Langham S.-A."/>
            <person name="McCullagh B."/>
            <person name="Bilham L."/>
            <person name="Robben J."/>
            <person name="van der Schueren J."/>
            <person name="Grymonprez B."/>
            <person name="Chuang Y.-J."/>
            <person name="Vandenbussche F."/>
            <person name="Braeken M."/>
            <person name="Weltjens I."/>
            <person name="Voet M."/>
            <person name="Bastiaens I."/>
            <person name="Aert R."/>
            <person name="Defoor E."/>
            <person name="Weitzenegger T."/>
            <person name="Bothe G."/>
            <person name="Ramsperger U."/>
            <person name="Hilbert H."/>
            <person name="Braun M."/>
            <person name="Holzer E."/>
            <person name="Brandt A."/>
            <person name="Peters S."/>
            <person name="van Staveren M."/>
            <person name="Dirkse W."/>
            <person name="Mooijman P."/>
            <person name="Klein Lankhorst R."/>
            <person name="Rose M."/>
            <person name="Hauf J."/>
            <person name="Koetter P."/>
            <person name="Berneiser S."/>
            <person name="Hempel S."/>
            <person name="Feldpausch M."/>
            <person name="Lamberth S."/>
            <person name="Van den Daele H."/>
            <person name="De Keyser A."/>
            <person name="Buysshaert C."/>
            <person name="Gielen J."/>
            <person name="Villarroel R."/>
            <person name="De Clercq R."/>
            <person name="van Montagu M."/>
            <person name="Rogers J."/>
            <person name="Cronin A."/>
            <person name="Quail M.A."/>
            <person name="Bray-Allen S."/>
            <person name="Clark L."/>
            <person name="Doggett J."/>
            <person name="Hall S."/>
            <person name="Kay M."/>
            <person name="Lennard N."/>
            <person name="McLay K."/>
            <person name="Mayes R."/>
            <person name="Pettett A."/>
            <person name="Rajandream M.A."/>
            <person name="Lyne M."/>
            <person name="Benes V."/>
            <person name="Rechmann S."/>
            <person name="Borkova D."/>
            <person name="Bloecker H."/>
            <person name="Scharfe M."/>
            <person name="Grimm M."/>
            <person name="Loehnert T.-H."/>
            <person name="Dose S."/>
            <person name="de Haan M."/>
            <person name="Maarse A.C."/>
            <person name="Schaefer M."/>
            <person name="Mueller-Auer S."/>
            <person name="Gabel C."/>
            <person name="Fuchs M."/>
            <person name="Fartmann B."/>
            <person name="Granderath K."/>
            <person name="Dauner D."/>
            <person name="Herzl A."/>
            <person name="Neumann S."/>
            <person name="Argiriou A."/>
            <person name="Vitale D."/>
            <person name="Liguori R."/>
            <person name="Piravandi E."/>
            <person name="Massenet O."/>
            <person name="Quigley F."/>
            <person name="Clabauld G."/>
            <person name="Muendlein A."/>
            <person name="Felber R."/>
            <person name="Schnabl S."/>
            <person name="Hiller R."/>
            <person name="Schmidt W."/>
            <person name="Lecharny A."/>
            <person name="Aubourg S."/>
            <person name="Chefdor F."/>
            <person name="Cooke R."/>
            <person name="Berger C."/>
            <person name="Monfort A."/>
            <person name="Casacuberta E."/>
            <person name="Gibbons T."/>
            <person name="Weber N."/>
            <person name="Vandenbol M."/>
            <person name="Bargues M."/>
            <person name="Terol J."/>
            <person name="Torres A."/>
            <person name="Perez-Perez A."/>
            <person name="Purnelle B."/>
            <person name="Bent E."/>
            <person name="Johnson S."/>
            <person name="Tacon D."/>
            <person name="Jesse T."/>
            <person name="Heijnen L."/>
            <person name="Schwarz S."/>
            <person name="Scholler P."/>
            <person name="Heber S."/>
            <person name="Francs P."/>
            <person name="Bielke C."/>
            <person name="Frishman D."/>
            <person name="Haase D."/>
            <person name="Lemcke K."/>
            <person name="Mewes H.-W."/>
            <person name="Stocker S."/>
            <person name="Zaccaria P."/>
            <person name="Bevan M."/>
            <person name="Wilson R.K."/>
            <person name="de la Bastide M."/>
            <person name="Habermann K."/>
            <person name="Parnell L."/>
            <person name="Dedhia N."/>
            <person name="Gnoj L."/>
            <person name="Schutz K."/>
            <person name="Huang E."/>
            <person name="Spiegel L."/>
            <person name="Sekhon M."/>
            <person name="Murray J."/>
            <person name="Sheet P."/>
            <person name="Cordes M."/>
            <person name="Abu-Threideh J."/>
            <person name="Stoneking T."/>
            <person name="Kalicki J."/>
            <person name="Graves T."/>
            <person name="Harmon G."/>
            <person name="Edwards J."/>
            <person name="Latreille P."/>
            <person name="Courtney L."/>
            <person name="Cloud J."/>
            <person name="Abbott A."/>
            <person name="Scott K."/>
            <person name="Johnson D."/>
            <person name="Minx P."/>
            <person name="Bentley D."/>
            <person name="Fulton B."/>
            <person name="Miller N."/>
            <person name="Greco T."/>
            <person name="Kemp K."/>
            <person name="Kramer J."/>
            <person name="Fulton L."/>
            <person name="Mardis E."/>
            <person name="Dante M."/>
            <person name="Pepin K."/>
            <person name="Hillier L.W."/>
            <person name="Nelson J."/>
            <person name="Spieth J."/>
            <person name="Ryan E."/>
            <person name="Andrews S."/>
            <person name="Geisel C."/>
            <person name="Layman D."/>
            <person name="Du H."/>
            <person name="Ali J."/>
            <person name="Berghoff A."/>
            <person name="Jones K."/>
            <person name="Drone K."/>
            <person name="Cotton M."/>
            <person name="Joshu C."/>
            <person name="Antonoiu B."/>
            <person name="Zidanic M."/>
            <person name="Strong C."/>
            <person name="Sun H."/>
            <person name="Lamar B."/>
            <person name="Yordan C."/>
            <person name="Ma P."/>
            <person name="Zhong J."/>
            <person name="Preston R."/>
            <person name="Vil D."/>
            <person name="Shekher M."/>
            <person name="Matero A."/>
            <person name="Shah R."/>
            <person name="Swaby I.K."/>
            <person name="O'Shaughnessy A."/>
            <person name="Rodriguez M."/>
            <person name="Hoffman J."/>
            <person name="Till S."/>
            <person name="Granat S."/>
            <person name="Shohdy N."/>
            <person name="Hasegawa A."/>
            <person name="Hameed A."/>
            <person name="Lodhi M."/>
            <person name="Johnson A."/>
            <person name="Chen E."/>
            <person name="Marra M.A."/>
            <person name="Martienssen R."/>
            <person name="McCombie W.R."/>
        </authorList>
    </citation>
    <scope>NUCLEOTIDE SEQUENCE [LARGE SCALE GENOMIC DNA]</scope>
    <source>
        <strain>cv. Columbia</strain>
    </source>
</reference>
<reference key="3">
    <citation type="journal article" date="2017" name="Plant J.">
        <title>Araport11: a complete reannotation of the Arabidopsis thaliana reference genome.</title>
        <authorList>
            <person name="Cheng C.Y."/>
            <person name="Krishnakumar V."/>
            <person name="Chan A.P."/>
            <person name="Thibaud-Nissen F."/>
            <person name="Schobel S."/>
            <person name="Town C.D."/>
        </authorList>
    </citation>
    <scope>GENOME REANNOTATION</scope>
    <source>
        <strain>cv. Columbia</strain>
    </source>
</reference>
<reference key="4">
    <citation type="submission" date="2009-03" db="EMBL/GenBank/DDBJ databases">
        <title>ORF cloning and analysis of Arabidopsis transcription factor genes.</title>
        <authorList>
            <person name="Fujita M."/>
            <person name="Mizukado S."/>
            <person name="Seki M."/>
            <person name="Shinozaki K."/>
            <person name="Mitsuda N."/>
            <person name="Takiguchi Y."/>
            <person name="Takagi M."/>
        </authorList>
    </citation>
    <scope>NUCLEOTIDE SEQUENCE [LARGE SCALE MRNA] (ISOFORM 1)</scope>
</reference>
<reference key="5">
    <citation type="submission" date="2006-03" db="EMBL/GenBank/DDBJ databases">
        <title>Arabidopsis ORF clones.</title>
        <authorList>
            <person name="Shinn P."/>
            <person name="Chen H."/>
            <person name="Kim C.J."/>
            <person name="Ecker J.R."/>
        </authorList>
    </citation>
    <scope>NUCLEOTIDE SEQUENCE [LARGE SCALE MRNA] (ISOFORM 2)</scope>
</reference>
<reference key="6">
    <citation type="submission" date="2004-01" db="EMBL/GenBank/DDBJ databases">
        <title>The MYB transcription factor family in Arabidopsis: a genome-wide cloning and expression pattern analysis.</title>
        <authorList>
            <person name="Qu L."/>
            <person name="Gu H."/>
        </authorList>
    </citation>
    <scope>NUCLEOTIDE SEQUENCE [LARGE SCALE MRNA] OF 19-303</scope>
</reference>
<reference key="7">
    <citation type="journal article" date="2009" name="Proc. Natl. Acad. Sci. U.S.A.">
        <title>REVEILLE1, a Myb-like transcription factor, integrates the circadian clock and auxin pathways.</title>
        <authorList>
            <person name="Rawat R."/>
            <person name="Schwartz J."/>
            <person name="Jones M.A."/>
            <person name="Sairanen I."/>
            <person name="Cheng Y."/>
            <person name="Andersson C.R."/>
            <person name="Zhao Y."/>
            <person name="Ljung K."/>
            <person name="Harmer S.L."/>
        </authorList>
    </citation>
    <scope>GENE FAMILY</scope>
    <scope>NOMENCLATURE</scope>
</reference>
<evidence type="ECO:0000250" key="1"/>
<evidence type="ECO:0000255" key="2">
    <source>
        <dbReference type="PROSITE-ProRule" id="PRU00625"/>
    </source>
</evidence>
<evidence type="ECO:0000256" key="3">
    <source>
        <dbReference type="SAM" id="MobiDB-lite"/>
    </source>
</evidence>
<evidence type="ECO:0000303" key="4">
    <source ref="1"/>
</evidence>
<evidence type="ECO:0000303" key="5">
    <source ref="5"/>
</evidence>
<evidence type="ECO:0000305" key="6"/>